<feature type="chain" id="PRO_1000072268" description="3-hydroxyacyl-[acyl-carrier-protein] dehydratase FabZ">
    <location>
        <begin position="1"/>
        <end position="148"/>
    </location>
</feature>
<feature type="active site" evidence="1">
    <location>
        <position position="50"/>
    </location>
</feature>
<evidence type="ECO:0000255" key="1">
    <source>
        <dbReference type="HAMAP-Rule" id="MF_00406"/>
    </source>
</evidence>
<sequence>MSVLDAAEIMDLIPNRYPILFMDKVDELNPGESIVCTKNVTINEEFFQGHFPGNPVMPGVLIIESLAQAASILILKTEKYQGKTAYLGAIDSAKFRKVVRPGDVLKLHVTMEKQRDNMGKVKCEAKVEDKVACSAELTFIVPDPKKKI</sequence>
<comment type="function">
    <text evidence="1">Involved in unsaturated fatty acids biosynthesis. Catalyzes the dehydration of short chain beta-hydroxyacyl-ACPs and long chain saturated and unsaturated beta-hydroxyacyl-ACPs.</text>
</comment>
<comment type="catalytic activity">
    <reaction evidence="1">
        <text>a (3R)-hydroxyacyl-[ACP] = a (2E)-enoyl-[ACP] + H2O</text>
        <dbReference type="Rhea" id="RHEA:13097"/>
        <dbReference type="Rhea" id="RHEA-COMP:9925"/>
        <dbReference type="Rhea" id="RHEA-COMP:9945"/>
        <dbReference type="ChEBI" id="CHEBI:15377"/>
        <dbReference type="ChEBI" id="CHEBI:78784"/>
        <dbReference type="ChEBI" id="CHEBI:78827"/>
        <dbReference type="EC" id="4.2.1.59"/>
    </reaction>
</comment>
<comment type="subcellular location">
    <subcellularLocation>
        <location evidence="1">Cytoplasm</location>
    </subcellularLocation>
</comment>
<comment type="similarity">
    <text evidence="1">Belongs to the thioester dehydratase family. FabZ subfamily.</text>
</comment>
<protein>
    <recommendedName>
        <fullName evidence="1">3-hydroxyacyl-[acyl-carrier-protein] dehydratase FabZ</fullName>
        <ecNumber evidence="1">4.2.1.59</ecNumber>
    </recommendedName>
    <alternativeName>
        <fullName evidence="1">(3R)-hydroxymyristoyl-[acyl-carrier-protein] dehydratase</fullName>
        <shortName evidence="1">(3R)-hydroxymyristoyl-ACP dehydrase</shortName>
    </alternativeName>
    <alternativeName>
        <fullName evidence="1">Beta-hydroxyacyl-ACP dehydratase</fullName>
    </alternativeName>
</protein>
<proteinExistence type="inferred from homology"/>
<accession>A8YXS1</accession>
<name>FABZ_LACH4</name>
<keyword id="KW-0963">Cytoplasm</keyword>
<keyword id="KW-0441">Lipid A biosynthesis</keyword>
<keyword id="KW-0444">Lipid biosynthesis</keyword>
<keyword id="KW-0443">Lipid metabolism</keyword>
<keyword id="KW-0456">Lyase</keyword>
<dbReference type="EC" id="4.2.1.59" evidence="1"/>
<dbReference type="EMBL" id="CP000517">
    <property type="protein sequence ID" value="ABX27771.1"/>
    <property type="molecule type" value="Genomic_DNA"/>
</dbReference>
<dbReference type="RefSeq" id="WP_003625233.1">
    <property type="nucleotide sequence ID" value="NC_010080.1"/>
</dbReference>
<dbReference type="SMR" id="A8YXS1"/>
<dbReference type="GeneID" id="72686052"/>
<dbReference type="KEGG" id="lhe:lhv_1933"/>
<dbReference type="eggNOG" id="COG0764">
    <property type="taxonomic scope" value="Bacteria"/>
</dbReference>
<dbReference type="HOGENOM" id="CLU_078912_1_1_9"/>
<dbReference type="Proteomes" id="UP000000790">
    <property type="component" value="Chromosome"/>
</dbReference>
<dbReference type="GO" id="GO:0005737">
    <property type="term" value="C:cytoplasm"/>
    <property type="evidence" value="ECO:0007669"/>
    <property type="project" value="UniProtKB-SubCell"/>
</dbReference>
<dbReference type="GO" id="GO:0016020">
    <property type="term" value="C:membrane"/>
    <property type="evidence" value="ECO:0007669"/>
    <property type="project" value="GOC"/>
</dbReference>
<dbReference type="GO" id="GO:0019171">
    <property type="term" value="F:(3R)-hydroxyacyl-[acyl-carrier-protein] dehydratase activity"/>
    <property type="evidence" value="ECO:0007669"/>
    <property type="project" value="UniProtKB-EC"/>
</dbReference>
<dbReference type="GO" id="GO:0006633">
    <property type="term" value="P:fatty acid biosynthetic process"/>
    <property type="evidence" value="ECO:0007669"/>
    <property type="project" value="UniProtKB-UniRule"/>
</dbReference>
<dbReference type="GO" id="GO:0009245">
    <property type="term" value="P:lipid A biosynthetic process"/>
    <property type="evidence" value="ECO:0007669"/>
    <property type="project" value="UniProtKB-UniRule"/>
</dbReference>
<dbReference type="CDD" id="cd01288">
    <property type="entry name" value="FabZ"/>
    <property type="match status" value="1"/>
</dbReference>
<dbReference type="FunFam" id="3.10.129.10:FF:000001">
    <property type="entry name" value="3-hydroxyacyl-[acyl-carrier-protein] dehydratase FabZ"/>
    <property type="match status" value="1"/>
</dbReference>
<dbReference type="Gene3D" id="3.10.129.10">
    <property type="entry name" value="Hotdog Thioesterase"/>
    <property type="match status" value="1"/>
</dbReference>
<dbReference type="HAMAP" id="MF_00406">
    <property type="entry name" value="FabZ"/>
    <property type="match status" value="1"/>
</dbReference>
<dbReference type="InterPro" id="IPR013114">
    <property type="entry name" value="FabA_FabZ"/>
</dbReference>
<dbReference type="InterPro" id="IPR010084">
    <property type="entry name" value="FabZ"/>
</dbReference>
<dbReference type="InterPro" id="IPR029069">
    <property type="entry name" value="HotDog_dom_sf"/>
</dbReference>
<dbReference type="NCBIfam" id="TIGR01750">
    <property type="entry name" value="fabZ"/>
    <property type="match status" value="1"/>
</dbReference>
<dbReference type="NCBIfam" id="NF000582">
    <property type="entry name" value="PRK00006.1"/>
    <property type="match status" value="1"/>
</dbReference>
<dbReference type="PANTHER" id="PTHR30272">
    <property type="entry name" value="3-HYDROXYACYL-[ACYL-CARRIER-PROTEIN] DEHYDRATASE"/>
    <property type="match status" value="1"/>
</dbReference>
<dbReference type="PANTHER" id="PTHR30272:SF1">
    <property type="entry name" value="3-HYDROXYACYL-[ACYL-CARRIER-PROTEIN] DEHYDRATASE"/>
    <property type="match status" value="1"/>
</dbReference>
<dbReference type="Pfam" id="PF07977">
    <property type="entry name" value="FabA"/>
    <property type="match status" value="1"/>
</dbReference>
<dbReference type="SUPFAM" id="SSF54637">
    <property type="entry name" value="Thioesterase/thiol ester dehydrase-isomerase"/>
    <property type="match status" value="1"/>
</dbReference>
<reference key="1">
    <citation type="journal article" date="2008" name="J. Bacteriol.">
        <title>Genome sequence of Lactobacillus helveticus: an organism distinguished by selective gene loss and IS element expansion.</title>
        <authorList>
            <person name="Callanan M."/>
            <person name="Kaleta P."/>
            <person name="O'Callaghan J."/>
            <person name="O'Sullivan O."/>
            <person name="Jordan K."/>
            <person name="McAuliffe O."/>
            <person name="Sangrador-Vegas A."/>
            <person name="Slattery L."/>
            <person name="Fitzgerald G.F."/>
            <person name="Beresford T."/>
            <person name="Ross R.P."/>
        </authorList>
    </citation>
    <scope>NUCLEOTIDE SEQUENCE [LARGE SCALE GENOMIC DNA]</scope>
    <source>
        <strain>DPC 4571</strain>
    </source>
</reference>
<gene>
    <name evidence="1" type="primary">fabZ</name>
    <name type="ordered locus">lhv_1933</name>
</gene>
<organism>
    <name type="scientific">Lactobacillus helveticus (strain DPC 4571)</name>
    <dbReference type="NCBI Taxonomy" id="405566"/>
    <lineage>
        <taxon>Bacteria</taxon>
        <taxon>Bacillati</taxon>
        <taxon>Bacillota</taxon>
        <taxon>Bacilli</taxon>
        <taxon>Lactobacillales</taxon>
        <taxon>Lactobacillaceae</taxon>
        <taxon>Lactobacillus</taxon>
    </lineage>
</organism>